<evidence type="ECO:0000255" key="1">
    <source>
        <dbReference type="HAMAP-Rule" id="MF_01341"/>
    </source>
</evidence>
<evidence type="ECO:0000256" key="2">
    <source>
        <dbReference type="SAM" id="MobiDB-lite"/>
    </source>
</evidence>
<evidence type="ECO:0000305" key="3"/>
<sequence>MDLSTLKPVAGSRKSSTRKARGFSAGKGKTAGRGQKGQKAREGKKLRLSFEGGQMPLMRRMPKRGFNNISRKEYAIVNLDQLNKFDDGTTVSASSLKEAGIIKKELSGVKVLASGKLNKKITIHAAKASQAAQDSIKEAGSKIILTTETADSEN</sequence>
<comment type="function">
    <text evidence="1">Binds to the 23S rRNA.</text>
</comment>
<comment type="subunit">
    <text evidence="1">Part of the 50S ribosomal subunit.</text>
</comment>
<comment type="similarity">
    <text evidence="1">Belongs to the universal ribosomal protein uL15 family.</text>
</comment>
<gene>
    <name evidence="1" type="primary">rplO</name>
    <name type="ordered locus">OEOE_0613</name>
</gene>
<feature type="chain" id="PRO_1000054504" description="Large ribosomal subunit protein uL15">
    <location>
        <begin position="1"/>
        <end position="154"/>
    </location>
</feature>
<feature type="region of interest" description="Disordered" evidence="2">
    <location>
        <begin position="1"/>
        <end position="61"/>
    </location>
</feature>
<protein>
    <recommendedName>
        <fullName evidence="1">Large ribosomal subunit protein uL15</fullName>
    </recommendedName>
    <alternativeName>
        <fullName evidence="3">50S ribosomal protein L15</fullName>
    </alternativeName>
</protein>
<proteinExistence type="inferred from homology"/>
<accession>Q04G67</accession>
<organism>
    <name type="scientific">Oenococcus oeni (strain ATCC BAA-331 / PSU-1)</name>
    <dbReference type="NCBI Taxonomy" id="203123"/>
    <lineage>
        <taxon>Bacteria</taxon>
        <taxon>Bacillati</taxon>
        <taxon>Bacillota</taxon>
        <taxon>Bacilli</taxon>
        <taxon>Lactobacillales</taxon>
        <taxon>Lactobacillaceae</taxon>
        <taxon>Oenococcus</taxon>
    </lineage>
</organism>
<name>RL15_OENOB</name>
<reference key="1">
    <citation type="journal article" date="2006" name="Proc. Natl. Acad. Sci. U.S.A.">
        <title>Comparative genomics of the lactic acid bacteria.</title>
        <authorList>
            <person name="Makarova K.S."/>
            <person name="Slesarev A."/>
            <person name="Wolf Y.I."/>
            <person name="Sorokin A."/>
            <person name="Mirkin B."/>
            <person name="Koonin E.V."/>
            <person name="Pavlov A."/>
            <person name="Pavlova N."/>
            <person name="Karamychev V."/>
            <person name="Polouchine N."/>
            <person name="Shakhova V."/>
            <person name="Grigoriev I."/>
            <person name="Lou Y."/>
            <person name="Rohksar D."/>
            <person name="Lucas S."/>
            <person name="Huang K."/>
            <person name="Goodstein D.M."/>
            <person name="Hawkins T."/>
            <person name="Plengvidhya V."/>
            <person name="Welker D."/>
            <person name="Hughes J."/>
            <person name="Goh Y."/>
            <person name="Benson A."/>
            <person name="Baldwin K."/>
            <person name="Lee J.-H."/>
            <person name="Diaz-Muniz I."/>
            <person name="Dosti B."/>
            <person name="Smeianov V."/>
            <person name="Wechter W."/>
            <person name="Barabote R."/>
            <person name="Lorca G."/>
            <person name="Altermann E."/>
            <person name="Barrangou R."/>
            <person name="Ganesan B."/>
            <person name="Xie Y."/>
            <person name="Rawsthorne H."/>
            <person name="Tamir D."/>
            <person name="Parker C."/>
            <person name="Breidt F."/>
            <person name="Broadbent J.R."/>
            <person name="Hutkins R."/>
            <person name="O'Sullivan D."/>
            <person name="Steele J."/>
            <person name="Unlu G."/>
            <person name="Saier M.H. Jr."/>
            <person name="Klaenhammer T."/>
            <person name="Richardson P."/>
            <person name="Kozyavkin S."/>
            <person name="Weimer B.C."/>
            <person name="Mills D.A."/>
        </authorList>
    </citation>
    <scope>NUCLEOTIDE SEQUENCE [LARGE SCALE GENOMIC DNA]</scope>
    <source>
        <strain>ATCC BAA-331 / PSU-1</strain>
    </source>
</reference>
<dbReference type="EMBL" id="CP000411">
    <property type="protein sequence ID" value="ABJ56555.1"/>
    <property type="molecule type" value="Genomic_DNA"/>
</dbReference>
<dbReference type="RefSeq" id="WP_002818469.1">
    <property type="nucleotide sequence ID" value="NC_008528.1"/>
</dbReference>
<dbReference type="SMR" id="Q04G67"/>
<dbReference type="STRING" id="203123.OEOE_0613"/>
<dbReference type="GeneID" id="75065435"/>
<dbReference type="KEGG" id="ooe:OEOE_0613"/>
<dbReference type="eggNOG" id="COG0200">
    <property type="taxonomic scope" value="Bacteria"/>
</dbReference>
<dbReference type="HOGENOM" id="CLU_055188_4_2_9"/>
<dbReference type="Proteomes" id="UP000000774">
    <property type="component" value="Chromosome"/>
</dbReference>
<dbReference type="GO" id="GO:0022625">
    <property type="term" value="C:cytosolic large ribosomal subunit"/>
    <property type="evidence" value="ECO:0007669"/>
    <property type="project" value="TreeGrafter"/>
</dbReference>
<dbReference type="GO" id="GO:0019843">
    <property type="term" value="F:rRNA binding"/>
    <property type="evidence" value="ECO:0007669"/>
    <property type="project" value="UniProtKB-UniRule"/>
</dbReference>
<dbReference type="GO" id="GO:0003735">
    <property type="term" value="F:structural constituent of ribosome"/>
    <property type="evidence" value="ECO:0007669"/>
    <property type="project" value="InterPro"/>
</dbReference>
<dbReference type="GO" id="GO:0006412">
    <property type="term" value="P:translation"/>
    <property type="evidence" value="ECO:0007669"/>
    <property type="project" value="UniProtKB-UniRule"/>
</dbReference>
<dbReference type="Gene3D" id="3.100.10.10">
    <property type="match status" value="1"/>
</dbReference>
<dbReference type="HAMAP" id="MF_01341">
    <property type="entry name" value="Ribosomal_uL15"/>
    <property type="match status" value="1"/>
</dbReference>
<dbReference type="InterPro" id="IPR030878">
    <property type="entry name" value="Ribosomal_uL15"/>
</dbReference>
<dbReference type="InterPro" id="IPR021131">
    <property type="entry name" value="Ribosomal_uL15/eL18"/>
</dbReference>
<dbReference type="InterPro" id="IPR036227">
    <property type="entry name" value="Ribosomal_uL15/eL18_sf"/>
</dbReference>
<dbReference type="InterPro" id="IPR005749">
    <property type="entry name" value="Ribosomal_uL15_bac-type"/>
</dbReference>
<dbReference type="InterPro" id="IPR001196">
    <property type="entry name" value="Ribosomal_uL15_CS"/>
</dbReference>
<dbReference type="NCBIfam" id="TIGR01071">
    <property type="entry name" value="rplO_bact"/>
    <property type="match status" value="1"/>
</dbReference>
<dbReference type="PANTHER" id="PTHR12934">
    <property type="entry name" value="50S RIBOSOMAL PROTEIN L15"/>
    <property type="match status" value="1"/>
</dbReference>
<dbReference type="PANTHER" id="PTHR12934:SF11">
    <property type="entry name" value="LARGE RIBOSOMAL SUBUNIT PROTEIN UL15M"/>
    <property type="match status" value="1"/>
</dbReference>
<dbReference type="Pfam" id="PF00828">
    <property type="entry name" value="Ribosomal_L27A"/>
    <property type="match status" value="1"/>
</dbReference>
<dbReference type="SUPFAM" id="SSF52080">
    <property type="entry name" value="Ribosomal proteins L15p and L18e"/>
    <property type="match status" value="1"/>
</dbReference>
<dbReference type="PROSITE" id="PS00475">
    <property type="entry name" value="RIBOSOMAL_L15"/>
    <property type="match status" value="1"/>
</dbReference>
<keyword id="KW-1185">Reference proteome</keyword>
<keyword id="KW-0687">Ribonucleoprotein</keyword>
<keyword id="KW-0689">Ribosomal protein</keyword>
<keyword id="KW-0694">RNA-binding</keyword>
<keyword id="KW-0699">rRNA-binding</keyword>